<proteinExistence type="evidence at protein level"/>
<reference evidence="5" key="1">
    <citation type="journal article" date="2012" name="Mol. Biosyst.">
        <title>De novo sequencing and characterization of a novel Bowman-Birk inhibitor from Lathyrus sativus L. seeds by electrospray mass spectrometry.</title>
        <authorList>
            <person name="Tamburino R."/>
            <person name="Severino V."/>
            <person name="Sandomenico A."/>
            <person name="Ruvo M."/>
            <person name="Parente A."/>
            <person name="Chambery A."/>
            <person name="Di Maro A."/>
        </authorList>
    </citation>
    <scope>PROTEIN SEQUENCE</scope>
    <scope>FUNCTION</scope>
    <scope>SUBUNIT</scope>
    <scope>MASS SPECTROMETRY</scope>
    <scope>IDENTIFICATION BY MASS SPECTROMETRY</scope>
    <source>
        <tissue evidence="4">Seed</tissue>
    </source>
</reference>
<feature type="chain" id="PRO_0000438849" description="Bowman-Birk type proteinase inhibitor 1a" evidence="3">
    <location>
        <begin position="1"/>
        <end position="10" status="greater than"/>
    </location>
</feature>
<feature type="disulfide bond" evidence="1">
    <location>
        <begin position="8"/>
        <end status="unknown"/>
    </location>
</feature>
<feature type="disulfide bond" evidence="1">
    <location>
        <begin position="9"/>
        <end status="unknown"/>
    </location>
</feature>
<feature type="non-terminal residue" evidence="4">
    <location>
        <position position="10"/>
    </location>
</feature>
<evidence type="ECO:0000250" key="1">
    <source>
        <dbReference type="UniProtKB" id="P56679"/>
    </source>
</evidence>
<evidence type="ECO:0000255" key="2"/>
<evidence type="ECO:0000269" key="3">
    <source>
    </source>
</evidence>
<evidence type="ECO:0000303" key="4">
    <source>
    </source>
</evidence>
<evidence type="ECO:0000305" key="5"/>
<evidence type="ECO:0000305" key="6">
    <source>
    </source>
</evidence>
<comment type="function">
    <text evidence="3">Inhibits trypsin (IC(50)=2.7 nM) and alpha-chymotrypsin (IC(50)=322 nM).</text>
</comment>
<comment type="subunit">
    <text evidence="3">Dimer.</text>
</comment>
<comment type="mass spectrometry"/>
<comment type="similarity">
    <text evidence="2">Belongs to the Bowman-Birk serine protease inhibitor family.</text>
</comment>
<organism evidence="4">
    <name type="scientific">Lathyrus sativus</name>
    <name type="common">White vetchling</name>
    <dbReference type="NCBI Taxonomy" id="3860"/>
    <lineage>
        <taxon>Eukaryota</taxon>
        <taxon>Viridiplantae</taxon>
        <taxon>Streptophyta</taxon>
        <taxon>Embryophyta</taxon>
        <taxon>Tracheophyta</taxon>
        <taxon>Spermatophyta</taxon>
        <taxon>Magnoliopsida</taxon>
        <taxon>eudicotyledons</taxon>
        <taxon>Gunneridae</taxon>
        <taxon>Pentapetalae</taxon>
        <taxon>rosids</taxon>
        <taxon>fabids</taxon>
        <taxon>Fabales</taxon>
        <taxon>Fabaceae</taxon>
        <taxon>Papilionoideae</taxon>
        <taxon>50 kb inversion clade</taxon>
        <taxon>NPAAA clade</taxon>
        <taxon>Hologalegina</taxon>
        <taxon>IRL clade</taxon>
        <taxon>Fabeae</taxon>
        <taxon>Lathyrus</taxon>
    </lineage>
</organism>
<protein>
    <recommendedName>
        <fullName evidence="6">Bowman-Birk type proteinase inhibitor 1a</fullName>
    </recommendedName>
    <alternativeName>
        <fullName evidence="4">LSI-1a</fullName>
    </alternativeName>
</protein>
<accession>C0HKB4</accession>
<dbReference type="GO" id="GO:0004867">
    <property type="term" value="F:serine-type endopeptidase inhibitor activity"/>
    <property type="evidence" value="ECO:0000314"/>
    <property type="project" value="UniProtKB"/>
</dbReference>
<dbReference type="GO" id="GO:1900004">
    <property type="term" value="P:negative regulation of serine-type endopeptidase activity"/>
    <property type="evidence" value="ECO:0000314"/>
    <property type="project" value="UniProtKB"/>
</dbReference>
<keyword id="KW-0903">Direct protein sequencing</keyword>
<keyword id="KW-1015">Disulfide bond</keyword>
<keyword id="KW-0646">Protease inhibitor</keyword>
<keyword id="KW-0722">Serine protease inhibitor</keyword>
<sequence>GDDVLSACCD</sequence>
<name>IBB1A_LATSA</name>